<accession>Q7Z4N8</accession>
<accession>A0AV13</accession>
<accession>B4DUD3</accession>
<accession>Q5EBL3</accession>
<accession>Q5JPA9</accession>
<organism>
    <name type="scientific">Homo sapiens</name>
    <name type="common">Human</name>
    <dbReference type="NCBI Taxonomy" id="9606"/>
    <lineage>
        <taxon>Eukaryota</taxon>
        <taxon>Metazoa</taxon>
        <taxon>Chordata</taxon>
        <taxon>Craniata</taxon>
        <taxon>Vertebrata</taxon>
        <taxon>Euteleostomi</taxon>
        <taxon>Mammalia</taxon>
        <taxon>Eutheria</taxon>
        <taxon>Euarchontoglires</taxon>
        <taxon>Primates</taxon>
        <taxon>Haplorrhini</taxon>
        <taxon>Catarrhini</taxon>
        <taxon>Hominidae</taxon>
        <taxon>Homo</taxon>
    </lineage>
</organism>
<feature type="signal peptide" evidence="1">
    <location>
        <begin position="1"/>
        <end position="19"/>
    </location>
</feature>
<feature type="chain" id="PRO_0000317766" description="Prolyl 4-hydroxylase subunit alpha-3">
    <location>
        <begin position="20"/>
        <end position="544"/>
    </location>
</feature>
<feature type="repeat" description="TPR">
    <location>
        <begin position="227"/>
        <end position="260"/>
    </location>
</feature>
<feature type="domain" description="Fe2OG dioxygenase" evidence="2">
    <location>
        <begin position="422"/>
        <end position="529"/>
    </location>
</feature>
<feature type="coiled-coil region" evidence="1">
    <location>
        <begin position="107"/>
        <end position="131"/>
    </location>
</feature>
<feature type="binding site" evidence="2">
    <location>
        <position position="440"/>
    </location>
    <ligand>
        <name>Fe cation</name>
        <dbReference type="ChEBI" id="CHEBI:24875"/>
    </ligand>
</feature>
<feature type="binding site" evidence="2">
    <location>
        <position position="442"/>
    </location>
    <ligand>
        <name>Fe cation</name>
        <dbReference type="ChEBI" id="CHEBI:24875"/>
    </ligand>
</feature>
<feature type="binding site" evidence="2">
    <location>
        <position position="510"/>
    </location>
    <ligand>
        <name>Fe cation</name>
        <dbReference type="ChEBI" id="CHEBI:24875"/>
    </ligand>
</feature>
<feature type="binding site" evidence="2">
    <location>
        <position position="520"/>
    </location>
    <ligand>
        <name>2-oxoglutarate</name>
        <dbReference type="ChEBI" id="CHEBI:16810"/>
    </ligand>
</feature>
<feature type="glycosylation site" description="N-linked (GlcNAc...) asparagine" evidence="1">
    <location>
        <position position="242"/>
    </location>
</feature>
<feature type="glycosylation site" description="N-linked (GlcNAc...) asparagine" evidence="1">
    <location>
        <position position="482"/>
    </location>
</feature>
<feature type="splice variant" id="VSP_031146" description="In isoform 2." evidence="7">
    <original>S</original>
    <variation>R</variation>
    <location>
        <position position="257"/>
    </location>
</feature>
<feature type="splice variant" id="VSP_031147" description="In isoform 2." evidence="7">
    <location>
        <begin position="258"/>
        <end position="544"/>
    </location>
</feature>
<feature type="splice variant" id="VSP_054131" description="In isoform 3." evidence="6">
    <original>NAALFWWNLHRSGEGDSDTLHAGCPVLVGDKWVANKWIHEYGQEFRRPCSSSPED</original>
    <variation>HCFGGTCTGVVKGTVTHFMLAVLSWWEISGWPTSGYMSMDRNSADPAAPALKTELLAERSWWSPVAFQRSQEPKAGVGEEKAEQPPGRRPCQLCLCLANQRQGRGCYQGTLRMYI</variation>
    <location>
        <begin position="490"/>
        <end position="544"/>
    </location>
</feature>
<feature type="sequence variant" id="VAR_038675" description="In dbSNP:rs2282488." evidence="5">
    <original>D</original>
    <variation>N</variation>
    <location>
        <position position="400"/>
    </location>
</feature>
<feature type="sequence conflict" description="In Ref. 8; AAH89446." evidence="8" ref="8">
    <original>D</original>
    <variation>Y</variation>
    <location>
        <position position="222"/>
    </location>
</feature>
<comment type="function">
    <text evidence="3 4">Catalyzes the post-translational formation of 4-hydroxyproline in -Xaa-Pro-Gly- sequences in collagens and other proteins.</text>
</comment>
<comment type="catalytic activity">
    <reaction evidence="4">
        <text>L-prolyl-[collagen] + 2-oxoglutarate + O2 = trans-4-hydroxy-L-prolyl-[collagen] + succinate + CO2</text>
        <dbReference type="Rhea" id="RHEA:18945"/>
        <dbReference type="Rhea" id="RHEA-COMP:11676"/>
        <dbReference type="Rhea" id="RHEA-COMP:11680"/>
        <dbReference type="ChEBI" id="CHEBI:15379"/>
        <dbReference type="ChEBI" id="CHEBI:16526"/>
        <dbReference type="ChEBI" id="CHEBI:16810"/>
        <dbReference type="ChEBI" id="CHEBI:30031"/>
        <dbReference type="ChEBI" id="CHEBI:50342"/>
        <dbReference type="ChEBI" id="CHEBI:61965"/>
        <dbReference type="EC" id="1.14.11.2"/>
    </reaction>
    <physiologicalReaction direction="left-to-right" evidence="9">
        <dbReference type="Rhea" id="RHEA:18946"/>
    </physiologicalReaction>
</comment>
<comment type="cofactor">
    <cofactor>
        <name>Fe(2+)</name>
        <dbReference type="ChEBI" id="CHEBI:29033"/>
    </cofactor>
    <text evidence="9">Binds 1 Fe(2+) ion per subunit.</text>
</comment>
<comment type="cofactor">
    <cofactor evidence="9">
        <name>L-ascorbate</name>
        <dbReference type="ChEBI" id="CHEBI:38290"/>
    </cofactor>
</comment>
<comment type="biophysicochemical properties">
    <kinetics>
        <KM evidence="4">0.5 uM for Fe(2+)</KM>
        <KM evidence="4">20 uM for 2-oxoglutarate</KM>
        <KM evidence="4">24 uM for (Pro-Pro-Gly)</KM>
        <KM evidence="4">370 uM for L-ascorbate</KM>
    </kinetics>
</comment>
<comment type="subunit">
    <text evidence="3 4">Heterotetramer of two alpha-3 chains and two beta chains (the beta chain is the multi-functional PDI).</text>
</comment>
<comment type="interaction">
    <interactant intactId="EBI-10181968">
        <id>Q7Z4N8</id>
    </interactant>
    <interactant intactId="EBI-1237371">
        <id>O14734</id>
        <label>ACOT8</label>
    </interactant>
    <organismsDiffer>false</organismsDiffer>
    <experiments>3</experiments>
</comment>
<comment type="interaction">
    <interactant intactId="EBI-10181968">
        <id>Q7Z4N8</id>
    </interactant>
    <interactant intactId="EBI-12015266">
        <id>P18825</id>
        <label>ADRA2C</label>
    </interactant>
    <organismsDiffer>false</organismsDiffer>
    <experiments>3</experiments>
</comment>
<comment type="interaction">
    <interactant intactId="EBI-10181968">
        <id>Q7Z4N8</id>
    </interactant>
    <interactant intactId="EBI-12224467">
        <id>Q9NYG5-2</id>
        <label>ANAPC11</label>
    </interactant>
    <organismsDiffer>false</organismsDiffer>
    <experiments>3</experiments>
</comment>
<comment type="interaction">
    <interactant intactId="EBI-10181968">
        <id>Q7Z4N8</id>
    </interactant>
    <interactant intactId="EBI-11954292">
        <id>Q86V38</id>
        <label>ATN1</label>
    </interactant>
    <organismsDiffer>false</organismsDiffer>
    <experiments>3</experiments>
</comment>
<comment type="interaction">
    <interactant intactId="EBI-10181968">
        <id>Q7Z4N8</id>
    </interactant>
    <interactant intactId="EBI-6958971">
        <id>Q9BPU9</id>
        <label>B9D2</label>
    </interactant>
    <organismsDiffer>false</organismsDiffer>
    <experiments>3</experiments>
</comment>
<comment type="interaction">
    <interactant intactId="EBI-10181968">
        <id>Q7Z4N8</id>
    </interactant>
    <interactant intactId="EBI-2949658">
        <id>O95429</id>
        <label>BAG4</label>
    </interactant>
    <organismsDiffer>false</organismsDiffer>
    <experiments>3</experiments>
</comment>
<comment type="interaction">
    <interactant intactId="EBI-10181968">
        <id>Q7Z4N8</id>
    </interactant>
    <interactant intactId="EBI-465872">
        <id>Q6QNY1</id>
        <label>BLOC1S2</label>
    </interactant>
    <organismsDiffer>false</organismsDiffer>
    <experiments>3</experiments>
</comment>
<comment type="interaction">
    <interactant intactId="EBI-10181968">
        <id>Q7Z4N8</id>
    </interactant>
    <interactant intactId="EBI-2817707">
        <id>Q9BXJ5</id>
        <label>C1QTNF2</label>
    </interactant>
    <organismsDiffer>false</organismsDiffer>
    <experiments>3</experiments>
</comment>
<comment type="interaction">
    <interactant intactId="EBI-10181968">
        <id>Q7Z4N8</id>
    </interactant>
    <interactant intactId="EBI-12261896">
        <id>Q5T4B2</id>
        <label>CERCAM</label>
    </interactant>
    <organismsDiffer>false</organismsDiffer>
    <experiments>3</experiments>
</comment>
<comment type="interaction">
    <interactant intactId="EBI-10181968">
        <id>Q7Z4N8</id>
    </interactant>
    <interactant intactId="EBI-712973">
        <id>P17540</id>
        <label>CKMT2</label>
    </interactant>
    <organismsDiffer>false</organismsDiffer>
    <experiments>3</experiments>
</comment>
<comment type="interaction">
    <interactant intactId="EBI-10181968">
        <id>Q7Z4N8</id>
    </interactant>
    <interactant intactId="EBI-1056029">
        <id>Q16740</id>
        <label>CLPP</label>
    </interactant>
    <organismsDiffer>false</organismsDiffer>
    <experiments>3</experiments>
</comment>
<comment type="interaction">
    <interactant intactId="EBI-10181968">
        <id>Q7Z4N8</id>
    </interactant>
    <interactant intactId="EBI-6873363">
        <id>Q8WUE5</id>
        <label>CT55</label>
    </interactant>
    <organismsDiffer>false</organismsDiffer>
    <experiments>3</experiments>
</comment>
<comment type="interaction">
    <interactant intactId="EBI-10181968">
        <id>Q7Z4N8</id>
    </interactant>
    <interactant intactId="EBI-1188472">
        <id>P78358</id>
        <label>CTAG1B</label>
    </interactant>
    <organismsDiffer>false</organismsDiffer>
    <experiments>3</experiments>
</comment>
<comment type="interaction">
    <interactant intactId="EBI-10181968">
        <id>Q7Z4N8</id>
    </interactant>
    <interactant intactId="EBI-747082">
        <id>Q9NSA3</id>
        <label>CTNNBIP1</label>
    </interactant>
    <organismsDiffer>false</organismsDiffer>
    <experiments>3</experiments>
</comment>
<comment type="interaction">
    <interactant intactId="EBI-10181968">
        <id>Q7Z4N8</id>
    </interactant>
    <interactant intactId="EBI-465804">
        <id>Q96EV8</id>
        <label>DTNBP1</label>
    </interactant>
    <organismsDiffer>false</organismsDiffer>
    <experiments>3</experiments>
</comment>
<comment type="interaction">
    <interactant intactId="EBI-10181968">
        <id>Q7Z4N8</id>
    </interactant>
    <interactant intactId="EBI-373319">
        <id>Q96C01</id>
        <label>FAM136A</label>
    </interactant>
    <organismsDiffer>false</organismsDiffer>
    <experiments>3</experiments>
</comment>
<comment type="interaction">
    <interactant intactId="EBI-10181968">
        <id>Q7Z4N8</id>
    </interactant>
    <interactant intactId="EBI-11128910">
        <id>Q9NSG2</id>
        <label>FIRRM</label>
    </interactant>
    <organismsDiffer>false</organismsDiffer>
    <experiments>3</experiments>
</comment>
<comment type="interaction">
    <interactant intactId="EBI-10181968">
        <id>Q7Z4N8</id>
    </interactant>
    <interactant intactId="EBI-12075758">
        <id>Q9NZ52-2</id>
        <label>GGA3</label>
    </interactant>
    <organismsDiffer>false</organismsDiffer>
    <experiments>3</experiments>
</comment>
<comment type="interaction">
    <interactant intactId="EBI-10181968">
        <id>Q7Z4N8</id>
    </interactant>
    <interactant intactId="EBI-347538">
        <id>Q9Y4H4</id>
        <label>GPSM3</label>
    </interactant>
    <organismsDiffer>false</organismsDiffer>
    <experiments>3</experiments>
</comment>
<comment type="interaction">
    <interactant intactId="EBI-10181968">
        <id>Q7Z4N8</id>
    </interactant>
    <interactant intactId="EBI-740220">
        <id>O14964</id>
        <label>HGS</label>
    </interactant>
    <organismsDiffer>false</organismsDiffer>
    <experiments>6</experiments>
</comment>
<comment type="interaction">
    <interactant intactId="EBI-10181968">
        <id>Q7Z4N8</id>
    </interactant>
    <interactant intactId="EBI-1048945">
        <id>Q3LI72</id>
        <label>KRTAP19-5</label>
    </interactant>
    <organismsDiffer>false</organismsDiffer>
    <experiments>3</experiments>
</comment>
<comment type="interaction">
    <interactant intactId="EBI-10181968">
        <id>Q7Z4N8</id>
    </interactant>
    <interactant intactId="EBI-12111050">
        <id>Q3LI64</id>
        <label>KRTAP6-1</label>
    </interactant>
    <organismsDiffer>false</organismsDiffer>
    <experiments>3</experiments>
</comment>
<comment type="interaction">
    <interactant intactId="EBI-10181968">
        <id>Q7Z4N8</id>
    </interactant>
    <interactant intactId="EBI-10261141">
        <id>Q8IUC2</id>
        <label>KRTAP8-1</label>
    </interactant>
    <organismsDiffer>false</organismsDiffer>
    <experiments>3</experiments>
</comment>
<comment type="interaction">
    <interactant intactId="EBI-10181968">
        <id>Q7Z4N8</id>
    </interactant>
    <interactant intactId="EBI-18273118">
        <id>Q9P2M1</id>
        <label>LRP2BP</label>
    </interactant>
    <organismsDiffer>false</organismsDiffer>
    <experiments>3</experiments>
</comment>
<comment type="interaction">
    <interactant intactId="EBI-10181968">
        <id>Q7Z4N8</id>
    </interactant>
    <interactant intactId="EBI-5650739">
        <id>P43356</id>
        <label>MAGEA2B</label>
    </interactant>
    <organismsDiffer>false</organismsDiffer>
    <experiments>4</experiments>
</comment>
<comment type="interaction">
    <interactant intactId="EBI-10181968">
        <id>Q7Z4N8</id>
    </interactant>
    <interactant intactId="EBI-10239285">
        <id>Q96E03</id>
        <label>MAGEA2B</label>
    </interactant>
    <organismsDiffer>false</organismsDiffer>
    <experiments>3</experiments>
</comment>
<comment type="interaction">
    <interactant intactId="EBI-10181968">
        <id>Q7Z4N8</id>
    </interactant>
    <interactant intactId="EBI-5651487">
        <id>Q9UBF1</id>
        <label>MAGEC2</label>
    </interactant>
    <organismsDiffer>false</organismsDiffer>
    <experiments>4</experiments>
</comment>
<comment type="interaction">
    <interactant intactId="EBI-10181968">
        <id>Q7Z4N8</id>
    </interactant>
    <interactant intactId="EBI-11987923">
        <id>P59942</id>
        <label>MCCD1</label>
    </interactant>
    <organismsDiffer>false</organismsDiffer>
    <experiments>3</experiments>
</comment>
<comment type="interaction">
    <interactant intactId="EBI-10181968">
        <id>Q7Z4N8</id>
    </interactant>
    <interactant intactId="EBI-748397">
        <id>P50222</id>
        <label>MEOX2</label>
    </interactant>
    <organismsDiffer>false</organismsDiffer>
    <experiments>3</experiments>
</comment>
<comment type="interaction">
    <interactant intactId="EBI-10181968">
        <id>Q7Z4N8</id>
    </interactant>
    <interactant intactId="EBI-19157918">
        <id>Q9UJ68</id>
        <label>MSRA</label>
    </interactant>
    <organismsDiffer>false</organismsDiffer>
    <experiments>3</experiments>
</comment>
<comment type="interaction">
    <interactant intactId="EBI-10181968">
        <id>Q7Z4N8</id>
    </interactant>
    <interactant intactId="EBI-16435852">
        <id>A0A0S2Z3Y6</id>
        <label>NDN</label>
    </interactant>
    <organismsDiffer>false</organismsDiffer>
    <experiments>3</experiments>
</comment>
<comment type="interaction">
    <interactant intactId="EBI-10181968">
        <id>Q7Z4N8</id>
    </interactant>
    <interactant intactId="EBI-16435864">
        <id>A0A0S2Z442</id>
        <label>NDN</label>
    </interactant>
    <organismsDiffer>false</organismsDiffer>
    <experiments>3</experiments>
</comment>
<comment type="interaction">
    <interactant intactId="EBI-10181968">
        <id>Q7Z4N8</id>
    </interactant>
    <interactant intactId="EBI-13324229">
        <id>Q9BSH3</id>
        <label>NICN1</label>
    </interactant>
    <organismsDiffer>false</organismsDiffer>
    <experiments>3</experiments>
</comment>
<comment type="interaction">
    <interactant intactId="EBI-10181968">
        <id>Q7Z4N8</id>
    </interactant>
    <interactant intactId="EBI-10178410">
        <id>Q86Y26</id>
        <label>NUTM1</label>
    </interactant>
    <organismsDiffer>false</organismsDiffer>
    <experiments>4</experiments>
</comment>
<comment type="interaction">
    <interactant intactId="EBI-10181968">
        <id>Q7Z4N8</id>
    </interactant>
    <interactant intactId="EBI-536879">
        <id>O43482</id>
        <label>OIP5</label>
    </interactant>
    <organismsDiffer>false</organismsDiffer>
    <experiments>3</experiments>
</comment>
<comment type="interaction">
    <interactant intactId="EBI-10181968">
        <id>Q7Z4N8</id>
    </interactant>
    <interactant intactId="EBI-9027467">
        <id>O75360</id>
        <label>PROP1</label>
    </interactant>
    <organismsDiffer>false</organismsDiffer>
    <experiments>3</experiments>
</comment>
<comment type="interaction">
    <interactant intactId="EBI-10181968">
        <id>Q7Z4N8</id>
    </interactant>
    <interactant intactId="EBI-603350">
        <id>P28070</id>
        <label>PSMB4</label>
    </interactant>
    <organismsDiffer>false</organismsDiffer>
    <experiments>3</experiments>
</comment>
<comment type="interaction">
    <interactant intactId="EBI-10181968">
        <id>Q7Z4N8</id>
    </interactant>
    <interactant intactId="EBI-12123390">
        <id>Q9NWB1-5</id>
        <label>RBFOX1</label>
    </interactant>
    <organismsDiffer>false</organismsDiffer>
    <experiments>3</experiments>
</comment>
<comment type="interaction">
    <interactant intactId="EBI-10181968">
        <id>Q7Z4N8</id>
    </interactant>
    <interactant intactId="EBI-6257312">
        <id>Q9BVN2</id>
        <label>RUSC1</label>
    </interactant>
    <organismsDiffer>false</organismsDiffer>
    <experiments>3</experiments>
</comment>
<comment type="interaction">
    <interactant intactId="EBI-10181968">
        <id>Q7Z4N8</id>
    </interactant>
    <interactant intactId="EBI-12823227">
        <id>Q6ZMJ2-2</id>
        <label>SCARA5</label>
    </interactant>
    <organismsDiffer>false</organismsDiffer>
    <experiments>3</experiments>
</comment>
<comment type="interaction">
    <interactant intactId="EBI-10181968">
        <id>Q7Z4N8</id>
    </interactant>
    <interactant intactId="EBI-2826300">
        <id>Q53GC0</id>
        <label>SERTAD1</label>
    </interactant>
    <organismsDiffer>false</organismsDiffer>
    <experiments>3</experiments>
</comment>
<comment type="interaction">
    <interactant intactId="EBI-10181968">
        <id>Q7Z4N8</id>
    </interactant>
    <interactant intactId="EBI-748621">
        <id>Q9UJW9</id>
        <label>SERTAD3</label>
    </interactant>
    <organismsDiffer>false</organismsDiffer>
    <experiments>3</experiments>
</comment>
<comment type="interaction">
    <interactant intactId="EBI-10181968">
        <id>Q7Z4N8</id>
    </interactant>
    <interactant intactId="EBI-725557">
        <id>Q9NZ72</id>
        <label>STMN3</label>
    </interactant>
    <organismsDiffer>false</organismsDiffer>
    <experiments>3</experiments>
</comment>
<comment type="interaction">
    <interactant intactId="EBI-10181968">
        <id>Q7Z4N8</id>
    </interactant>
    <interactant intactId="EBI-11741437">
        <id>Q08117-2</id>
        <label>TLE5</label>
    </interactant>
    <organismsDiffer>false</organismsDiffer>
    <experiments>3</experiments>
</comment>
<comment type="interaction">
    <interactant intactId="EBI-10181968">
        <id>Q7Z4N8</id>
    </interactant>
    <interactant intactId="EBI-12815137">
        <id>Q96NM4-3</id>
        <label>TOX2</label>
    </interactant>
    <organismsDiffer>false</organismsDiffer>
    <experiments>3</experiments>
</comment>
<comment type="interaction">
    <interactant intactId="EBI-10181968">
        <id>Q7Z4N8</id>
    </interactant>
    <interactant intactId="EBI-2559305">
        <id>A5D8V6</id>
        <label>VPS37C</label>
    </interactant>
    <organismsDiffer>false</organismsDiffer>
    <experiments>3</experiments>
</comment>
<comment type="interaction">
    <interactant intactId="EBI-10181968">
        <id>Q7Z4N8</id>
    </interactant>
    <interactant intactId="EBI-714790">
        <id>O43379</id>
        <label>WDR62</label>
    </interactant>
    <organismsDiffer>false</organismsDiffer>
    <experiments>3</experiments>
</comment>
<comment type="interaction">
    <interactant intactId="EBI-10181968">
        <id>Q7Z4N8</id>
    </interactant>
    <interactant intactId="EBI-11522250">
        <id>O15156-2</id>
        <label>ZBTB7B</label>
    </interactant>
    <organismsDiffer>false</organismsDiffer>
    <experiments>3</experiments>
</comment>
<comment type="interaction">
    <interactant intactId="EBI-10181968">
        <id>Q7Z4N8</id>
    </interactant>
    <interactant intactId="EBI-747793">
        <id>Q5D1E8</id>
        <label>ZC3H12A</label>
    </interactant>
    <organismsDiffer>false</organismsDiffer>
    <experiments>6</experiments>
</comment>
<comment type="subcellular location">
    <subcellularLocation>
        <location evidence="8">Endoplasmic reticulum lumen</location>
    </subcellularLocation>
</comment>
<comment type="alternative products">
    <event type="alternative splicing"/>
    <isoform>
        <id>Q7Z4N8-1</id>
        <name>1</name>
        <sequence type="displayed"/>
    </isoform>
    <isoform>
        <id>Q7Z4N8-2</id>
        <name>2</name>
        <sequence type="described" ref="VSP_031146 VSP_031147"/>
    </isoform>
    <isoform>
        <id>Q7Z4N8-3</id>
        <name>3</name>
        <sequence type="described" ref="VSP_054131"/>
    </isoform>
</comment>
<comment type="tissue specificity">
    <text evidence="3 4">Highly expressed in placenta, liver and fetal skin. Weakly expressed in fetal epiphyseal cartilage, fetal liver, fibroblast, lung and skeletal muscle. Expressed also in fibrous cap of carotid atherosclerotic lesions.</text>
</comment>
<comment type="PTM">
    <text>N-glycosylation plays no role in the catalytic activity.</text>
</comment>
<comment type="similarity">
    <text evidence="8">Belongs to the P4HA family.</text>
</comment>
<name>P4HA3_HUMAN</name>
<dbReference type="EC" id="1.14.11.2" evidence="4"/>
<dbReference type="EMBL" id="AY313448">
    <property type="protein sequence ID" value="AAQ87603.1"/>
    <property type="molecule type" value="mRNA"/>
</dbReference>
<dbReference type="EMBL" id="AY327887">
    <property type="protein sequence ID" value="AAP97874.1"/>
    <property type="molecule type" value="mRNA"/>
</dbReference>
<dbReference type="EMBL" id="AY358521">
    <property type="protein sequence ID" value="AAQ88885.1"/>
    <property type="molecule type" value="mRNA"/>
</dbReference>
<dbReference type="EMBL" id="AK300598">
    <property type="protein sequence ID" value="BAG62295.1"/>
    <property type="molecule type" value="mRNA"/>
</dbReference>
<dbReference type="EMBL" id="AP000577">
    <property type="status" value="NOT_ANNOTATED_CDS"/>
    <property type="molecule type" value="Genomic_DNA"/>
</dbReference>
<dbReference type="EMBL" id="AP001085">
    <property type="status" value="NOT_ANNOTATED_CDS"/>
    <property type="molecule type" value="Genomic_DNA"/>
</dbReference>
<dbReference type="EMBL" id="AL833965">
    <property type="protein sequence ID" value="CAI46215.1"/>
    <property type="molecule type" value="mRNA"/>
</dbReference>
<dbReference type="EMBL" id="CH471076">
    <property type="protein sequence ID" value="EAW74935.1"/>
    <property type="molecule type" value="Genomic_DNA"/>
</dbReference>
<dbReference type="EMBL" id="BC089446">
    <property type="protein sequence ID" value="AAH89446.1"/>
    <property type="molecule type" value="mRNA"/>
</dbReference>
<dbReference type="EMBL" id="BC117333">
    <property type="protein sequence ID" value="AAI17334.1"/>
    <property type="molecule type" value="mRNA"/>
</dbReference>
<dbReference type="EMBL" id="BC126170">
    <property type="protein sequence ID" value="AAI26171.1"/>
    <property type="molecule type" value="mRNA"/>
</dbReference>
<dbReference type="CCDS" id="CCDS73347.1">
    <molecule id="Q7Z4N8-3"/>
</dbReference>
<dbReference type="CCDS" id="CCDS8230.1">
    <molecule id="Q7Z4N8-1"/>
</dbReference>
<dbReference type="RefSeq" id="NP_001275677.1">
    <molecule id="Q7Z4N8-3"/>
    <property type="nucleotide sequence ID" value="NM_001288748.2"/>
</dbReference>
<dbReference type="RefSeq" id="NP_878907.1">
    <molecule id="Q7Z4N8-1"/>
    <property type="nucleotide sequence ID" value="NM_182904.5"/>
</dbReference>
<dbReference type="SMR" id="Q7Z4N8"/>
<dbReference type="BioGRID" id="129495">
    <property type="interactions" value="144"/>
</dbReference>
<dbReference type="CORUM" id="Q7Z4N8"/>
<dbReference type="FunCoup" id="Q7Z4N8">
    <property type="interactions" value="538"/>
</dbReference>
<dbReference type="IntAct" id="Q7Z4N8">
    <property type="interactions" value="109"/>
</dbReference>
<dbReference type="MINT" id="Q7Z4N8"/>
<dbReference type="STRING" id="9606.ENSP00000401749"/>
<dbReference type="GlyCosmos" id="Q7Z4N8">
    <property type="glycosylation" value="2 sites, No reported glycans"/>
</dbReference>
<dbReference type="GlyGen" id="Q7Z4N8">
    <property type="glycosylation" value="2 sites, 1 N-linked glycan (1 site)"/>
</dbReference>
<dbReference type="iPTMnet" id="Q7Z4N8"/>
<dbReference type="PhosphoSitePlus" id="Q7Z4N8"/>
<dbReference type="BioMuta" id="P4HA3"/>
<dbReference type="DMDM" id="74738714"/>
<dbReference type="jPOST" id="Q7Z4N8"/>
<dbReference type="MassIVE" id="Q7Z4N8"/>
<dbReference type="PaxDb" id="9606-ENSP00000401749"/>
<dbReference type="PeptideAtlas" id="Q7Z4N8"/>
<dbReference type="ProteomicsDB" id="5178"/>
<dbReference type="ProteomicsDB" id="69217">
    <molecule id="Q7Z4N8-1"/>
</dbReference>
<dbReference type="ProteomicsDB" id="69218">
    <molecule id="Q7Z4N8-2"/>
</dbReference>
<dbReference type="Pumba" id="Q7Z4N8"/>
<dbReference type="Antibodypedia" id="2002">
    <property type="antibodies" value="147 antibodies from 24 providers"/>
</dbReference>
<dbReference type="DNASU" id="283208"/>
<dbReference type="Ensembl" id="ENST00000331597.9">
    <molecule id="Q7Z4N8-1"/>
    <property type="protein sequence ID" value="ENSP00000332170.4"/>
    <property type="gene ID" value="ENSG00000149380.12"/>
</dbReference>
<dbReference type="Ensembl" id="ENST00000427714.2">
    <molecule id="Q7Z4N8-3"/>
    <property type="protein sequence ID" value="ENSP00000401749.2"/>
    <property type="gene ID" value="ENSG00000149380.12"/>
</dbReference>
<dbReference type="Ensembl" id="ENST00000524388.5">
    <molecule id="Q7Z4N8-2"/>
    <property type="protein sequence ID" value="ENSP00000433860.1"/>
    <property type="gene ID" value="ENSG00000149380.12"/>
</dbReference>
<dbReference type="GeneID" id="283208"/>
<dbReference type="KEGG" id="hsa:283208"/>
<dbReference type="MANE-Select" id="ENST00000331597.9">
    <property type="protein sequence ID" value="ENSP00000332170.4"/>
    <property type="RefSeq nucleotide sequence ID" value="NM_182904.5"/>
    <property type="RefSeq protein sequence ID" value="NP_878907.1"/>
</dbReference>
<dbReference type="UCSC" id="uc001ouz.5">
    <molecule id="Q7Z4N8-1"/>
    <property type="organism name" value="human"/>
</dbReference>
<dbReference type="AGR" id="HGNC:30135"/>
<dbReference type="CTD" id="283208"/>
<dbReference type="DisGeNET" id="283208"/>
<dbReference type="GeneCards" id="P4HA3"/>
<dbReference type="HGNC" id="HGNC:30135">
    <property type="gene designation" value="P4HA3"/>
</dbReference>
<dbReference type="HPA" id="ENSG00000149380">
    <property type="expression patterns" value="Tissue enhanced (smooth)"/>
</dbReference>
<dbReference type="MIM" id="608987">
    <property type="type" value="gene"/>
</dbReference>
<dbReference type="neXtProt" id="NX_Q7Z4N8"/>
<dbReference type="OpenTargets" id="ENSG00000149380"/>
<dbReference type="PharmGKB" id="PA134870931"/>
<dbReference type="VEuPathDB" id="HostDB:ENSG00000149380"/>
<dbReference type="eggNOG" id="KOG1591">
    <property type="taxonomic scope" value="Eukaryota"/>
</dbReference>
<dbReference type="GeneTree" id="ENSGT00940000158967"/>
<dbReference type="HOGENOM" id="CLU_024155_0_0_1"/>
<dbReference type="InParanoid" id="Q7Z4N8"/>
<dbReference type="OMA" id="DKWANKW"/>
<dbReference type="OrthoDB" id="420380at2759"/>
<dbReference type="PAN-GO" id="Q7Z4N8">
    <property type="GO annotations" value="3 GO annotations based on evolutionary models"/>
</dbReference>
<dbReference type="PhylomeDB" id="Q7Z4N8"/>
<dbReference type="TreeFam" id="TF313393"/>
<dbReference type="BRENDA" id="1.14.11.2">
    <property type="organism ID" value="2681"/>
</dbReference>
<dbReference type="PathwayCommons" id="Q7Z4N8"/>
<dbReference type="Reactome" id="R-HSA-1650814">
    <property type="pathway name" value="Collagen biosynthesis and modifying enzymes"/>
</dbReference>
<dbReference type="SignaLink" id="Q7Z4N8"/>
<dbReference type="BioGRID-ORCS" id="283208">
    <property type="hits" value="15 hits in 1152 CRISPR screens"/>
</dbReference>
<dbReference type="ChiTaRS" id="P4HA3">
    <property type="organism name" value="human"/>
</dbReference>
<dbReference type="GenomeRNAi" id="283208"/>
<dbReference type="Pharos" id="Q7Z4N8">
    <property type="development level" value="Tbio"/>
</dbReference>
<dbReference type="PRO" id="PR:Q7Z4N8"/>
<dbReference type="Proteomes" id="UP000005640">
    <property type="component" value="Chromosome 11"/>
</dbReference>
<dbReference type="RNAct" id="Q7Z4N8">
    <property type="molecule type" value="protein"/>
</dbReference>
<dbReference type="Bgee" id="ENSG00000149380">
    <property type="expression patterns" value="Expressed in decidua and 136 other cell types or tissues"/>
</dbReference>
<dbReference type="ExpressionAtlas" id="Q7Z4N8">
    <property type="expression patterns" value="baseline and differential"/>
</dbReference>
<dbReference type="GO" id="GO:0005783">
    <property type="term" value="C:endoplasmic reticulum"/>
    <property type="evidence" value="ECO:0000318"/>
    <property type="project" value="GO_Central"/>
</dbReference>
<dbReference type="GO" id="GO:0005788">
    <property type="term" value="C:endoplasmic reticulum lumen"/>
    <property type="evidence" value="ECO:0000304"/>
    <property type="project" value="Reactome"/>
</dbReference>
<dbReference type="GO" id="GO:0005506">
    <property type="term" value="F:iron ion binding"/>
    <property type="evidence" value="ECO:0007669"/>
    <property type="project" value="InterPro"/>
</dbReference>
<dbReference type="GO" id="GO:0031418">
    <property type="term" value="F:L-ascorbic acid binding"/>
    <property type="evidence" value="ECO:0007669"/>
    <property type="project" value="UniProtKB-KW"/>
</dbReference>
<dbReference type="GO" id="GO:0004656">
    <property type="term" value="F:procollagen-proline 4-dioxygenase activity"/>
    <property type="evidence" value="ECO:0000318"/>
    <property type="project" value="GO_Central"/>
</dbReference>
<dbReference type="GO" id="GO:0030199">
    <property type="term" value="P:collagen fibril organization"/>
    <property type="evidence" value="ECO:0000318"/>
    <property type="project" value="GO_Central"/>
</dbReference>
<dbReference type="FunFam" id="2.60.120.620:FF:000013">
    <property type="entry name" value="Prolyl 4-hydroxylase subunit alpha 3"/>
    <property type="match status" value="1"/>
</dbReference>
<dbReference type="FunFam" id="1.25.40.10:FF:000161">
    <property type="entry name" value="prolyl 4-hydroxylase subunit alpha-3 isoform X1"/>
    <property type="match status" value="1"/>
</dbReference>
<dbReference type="Gene3D" id="6.10.140.1460">
    <property type="match status" value="1"/>
</dbReference>
<dbReference type="Gene3D" id="2.60.120.620">
    <property type="entry name" value="q2cbj1_9rhob like domain"/>
    <property type="match status" value="1"/>
</dbReference>
<dbReference type="Gene3D" id="1.25.40.10">
    <property type="entry name" value="Tetratricopeptide repeat domain"/>
    <property type="match status" value="1"/>
</dbReference>
<dbReference type="InterPro" id="IPR005123">
    <property type="entry name" value="Oxoglu/Fe-dep_dioxygenase_dom"/>
</dbReference>
<dbReference type="InterPro" id="IPR045054">
    <property type="entry name" value="P4HA-like"/>
</dbReference>
<dbReference type="InterPro" id="IPR006620">
    <property type="entry name" value="Pro_4_hyd_alph"/>
</dbReference>
<dbReference type="InterPro" id="IPR044862">
    <property type="entry name" value="Pro_4_hyd_alph_FE2OG_OXY"/>
</dbReference>
<dbReference type="InterPro" id="IPR013547">
    <property type="entry name" value="Pro_4_hyd_alph_N"/>
</dbReference>
<dbReference type="InterPro" id="IPR011990">
    <property type="entry name" value="TPR-like_helical_dom_sf"/>
</dbReference>
<dbReference type="PANTHER" id="PTHR10869">
    <property type="entry name" value="PROLYL 4-HYDROXYLASE ALPHA SUBUNIT"/>
    <property type="match status" value="1"/>
</dbReference>
<dbReference type="PANTHER" id="PTHR10869:SF223">
    <property type="entry name" value="PROLYL 4-HYDROXYLASE SUBUNIT ALPHA-3"/>
    <property type="match status" value="1"/>
</dbReference>
<dbReference type="Pfam" id="PF13640">
    <property type="entry name" value="2OG-FeII_Oxy_3"/>
    <property type="match status" value="1"/>
</dbReference>
<dbReference type="Pfam" id="PF08336">
    <property type="entry name" value="P4Ha_N"/>
    <property type="match status" value="1"/>
</dbReference>
<dbReference type="Pfam" id="PF23558">
    <property type="entry name" value="TPR_P4H"/>
    <property type="match status" value="1"/>
</dbReference>
<dbReference type="SMART" id="SM00702">
    <property type="entry name" value="P4Hc"/>
    <property type="match status" value="1"/>
</dbReference>
<dbReference type="SUPFAM" id="SSF48452">
    <property type="entry name" value="TPR-like"/>
    <property type="match status" value="1"/>
</dbReference>
<dbReference type="PROSITE" id="PS51471">
    <property type="entry name" value="FE2OG_OXY"/>
    <property type="match status" value="1"/>
</dbReference>
<proteinExistence type="evidence at protein level"/>
<reference key="1">
    <citation type="journal article" date="2003" name="J. Biol. Chem.">
        <title>Identification and characterization of a third human, rat, and mouse collagen prolyl 4-hydroxylase isoenzyme.</title>
        <authorList>
            <person name="Kukkola L."/>
            <person name="Hieta R."/>
            <person name="Kivirikko K.I."/>
            <person name="Myllyharju J."/>
        </authorList>
    </citation>
    <scope>NUCLEOTIDE SEQUENCE [MRNA] (ISOFORM 1)</scope>
    <scope>FUNCTION</scope>
    <scope>SUBUNIT</scope>
    <scope>TISSUE SPECIFICITY</scope>
    <scope>CATALYTIC ACTIVITY</scope>
    <scope>BIOPHYSICOCHEMICAL PROPERTIES</scope>
    <source>
        <tissue>Umbilical vein endothelial cell</tissue>
    </source>
</reference>
<reference key="2">
    <citation type="journal article" date="2003" name="Circulation">
        <title>Cloning of a novel prolyl 4-hydroxylase subunit expressed in the fibrous cap of human atherosclerotic plaque.</title>
        <authorList>
            <person name="Van Den Diepstraten C."/>
            <person name="Papay K."/>
            <person name="Bolender Z."/>
            <person name="Brown A."/>
            <person name="Pickering J.G."/>
        </authorList>
    </citation>
    <scope>NUCLEOTIDE SEQUENCE [MRNA] (ISOFORM 1)</scope>
    <scope>FUNCTION</scope>
    <scope>SUBUNIT</scope>
    <scope>TISSUE SPECIFICITY</scope>
    <source>
        <tissue>Vascular smooth muscle</tissue>
    </source>
</reference>
<reference key="3">
    <citation type="journal article" date="2003" name="Genome Res.">
        <title>The secreted protein discovery initiative (SPDI), a large-scale effort to identify novel human secreted and transmembrane proteins: a bioinformatics assessment.</title>
        <authorList>
            <person name="Clark H.F."/>
            <person name="Gurney A.L."/>
            <person name="Abaya E."/>
            <person name="Baker K."/>
            <person name="Baldwin D.T."/>
            <person name="Brush J."/>
            <person name="Chen J."/>
            <person name="Chow B."/>
            <person name="Chui C."/>
            <person name="Crowley C."/>
            <person name="Currell B."/>
            <person name="Deuel B."/>
            <person name="Dowd P."/>
            <person name="Eaton D."/>
            <person name="Foster J.S."/>
            <person name="Grimaldi C."/>
            <person name="Gu Q."/>
            <person name="Hass P.E."/>
            <person name="Heldens S."/>
            <person name="Huang A."/>
            <person name="Kim H.S."/>
            <person name="Klimowski L."/>
            <person name="Jin Y."/>
            <person name="Johnson S."/>
            <person name="Lee J."/>
            <person name="Lewis L."/>
            <person name="Liao D."/>
            <person name="Mark M.R."/>
            <person name="Robbie E."/>
            <person name="Sanchez C."/>
            <person name="Schoenfeld J."/>
            <person name="Seshagiri S."/>
            <person name="Simmons L."/>
            <person name="Singh J."/>
            <person name="Smith V."/>
            <person name="Stinson J."/>
            <person name="Vagts A."/>
            <person name="Vandlen R.L."/>
            <person name="Watanabe C."/>
            <person name="Wieand D."/>
            <person name="Woods K."/>
            <person name="Xie M.-H."/>
            <person name="Yansura D.G."/>
            <person name="Yi S."/>
            <person name="Yu G."/>
            <person name="Yuan J."/>
            <person name="Zhang M."/>
            <person name="Zhang Z."/>
            <person name="Goddard A.D."/>
            <person name="Wood W.I."/>
            <person name="Godowski P.J."/>
            <person name="Gray A.M."/>
        </authorList>
    </citation>
    <scope>NUCLEOTIDE SEQUENCE [LARGE SCALE MRNA] (ISOFORM 1)</scope>
</reference>
<reference key="4">
    <citation type="journal article" date="2004" name="Nat. Genet.">
        <title>Complete sequencing and characterization of 21,243 full-length human cDNAs.</title>
        <authorList>
            <person name="Ota T."/>
            <person name="Suzuki Y."/>
            <person name="Nishikawa T."/>
            <person name="Otsuki T."/>
            <person name="Sugiyama T."/>
            <person name="Irie R."/>
            <person name="Wakamatsu A."/>
            <person name="Hayashi K."/>
            <person name="Sato H."/>
            <person name="Nagai K."/>
            <person name="Kimura K."/>
            <person name="Makita H."/>
            <person name="Sekine M."/>
            <person name="Obayashi M."/>
            <person name="Nishi T."/>
            <person name="Shibahara T."/>
            <person name="Tanaka T."/>
            <person name="Ishii S."/>
            <person name="Yamamoto J."/>
            <person name="Saito K."/>
            <person name="Kawai Y."/>
            <person name="Isono Y."/>
            <person name="Nakamura Y."/>
            <person name="Nagahari K."/>
            <person name="Murakami K."/>
            <person name="Yasuda T."/>
            <person name="Iwayanagi T."/>
            <person name="Wagatsuma M."/>
            <person name="Shiratori A."/>
            <person name="Sudo H."/>
            <person name="Hosoiri T."/>
            <person name="Kaku Y."/>
            <person name="Kodaira H."/>
            <person name="Kondo H."/>
            <person name="Sugawara M."/>
            <person name="Takahashi M."/>
            <person name="Kanda K."/>
            <person name="Yokoi T."/>
            <person name="Furuya T."/>
            <person name="Kikkawa E."/>
            <person name="Omura Y."/>
            <person name="Abe K."/>
            <person name="Kamihara K."/>
            <person name="Katsuta N."/>
            <person name="Sato K."/>
            <person name="Tanikawa M."/>
            <person name="Yamazaki M."/>
            <person name="Ninomiya K."/>
            <person name="Ishibashi T."/>
            <person name="Yamashita H."/>
            <person name="Murakawa K."/>
            <person name="Fujimori K."/>
            <person name="Tanai H."/>
            <person name="Kimata M."/>
            <person name="Watanabe M."/>
            <person name="Hiraoka S."/>
            <person name="Chiba Y."/>
            <person name="Ishida S."/>
            <person name="Ono Y."/>
            <person name="Takiguchi S."/>
            <person name="Watanabe S."/>
            <person name="Yosida M."/>
            <person name="Hotuta T."/>
            <person name="Kusano J."/>
            <person name="Kanehori K."/>
            <person name="Takahashi-Fujii A."/>
            <person name="Hara H."/>
            <person name="Tanase T.-O."/>
            <person name="Nomura Y."/>
            <person name="Togiya S."/>
            <person name="Komai F."/>
            <person name="Hara R."/>
            <person name="Takeuchi K."/>
            <person name="Arita M."/>
            <person name="Imose N."/>
            <person name="Musashino K."/>
            <person name="Yuuki H."/>
            <person name="Oshima A."/>
            <person name="Sasaki N."/>
            <person name="Aotsuka S."/>
            <person name="Yoshikawa Y."/>
            <person name="Matsunawa H."/>
            <person name="Ichihara T."/>
            <person name="Shiohata N."/>
            <person name="Sano S."/>
            <person name="Moriya S."/>
            <person name="Momiyama H."/>
            <person name="Satoh N."/>
            <person name="Takami S."/>
            <person name="Terashima Y."/>
            <person name="Suzuki O."/>
            <person name="Nakagawa S."/>
            <person name="Senoh A."/>
            <person name="Mizoguchi H."/>
            <person name="Goto Y."/>
            <person name="Shimizu F."/>
            <person name="Wakebe H."/>
            <person name="Hishigaki H."/>
            <person name="Watanabe T."/>
            <person name="Sugiyama A."/>
            <person name="Takemoto M."/>
            <person name="Kawakami B."/>
            <person name="Yamazaki M."/>
            <person name="Watanabe K."/>
            <person name="Kumagai A."/>
            <person name="Itakura S."/>
            <person name="Fukuzumi Y."/>
            <person name="Fujimori Y."/>
            <person name="Komiyama M."/>
            <person name="Tashiro H."/>
            <person name="Tanigami A."/>
            <person name="Fujiwara T."/>
            <person name="Ono T."/>
            <person name="Yamada K."/>
            <person name="Fujii Y."/>
            <person name="Ozaki K."/>
            <person name="Hirao M."/>
            <person name="Ohmori Y."/>
            <person name="Kawabata A."/>
            <person name="Hikiji T."/>
            <person name="Kobatake N."/>
            <person name="Inagaki H."/>
            <person name="Ikema Y."/>
            <person name="Okamoto S."/>
            <person name="Okitani R."/>
            <person name="Kawakami T."/>
            <person name="Noguchi S."/>
            <person name="Itoh T."/>
            <person name="Shigeta K."/>
            <person name="Senba T."/>
            <person name="Matsumura K."/>
            <person name="Nakajima Y."/>
            <person name="Mizuno T."/>
            <person name="Morinaga M."/>
            <person name="Sasaki M."/>
            <person name="Togashi T."/>
            <person name="Oyama M."/>
            <person name="Hata H."/>
            <person name="Watanabe M."/>
            <person name="Komatsu T."/>
            <person name="Mizushima-Sugano J."/>
            <person name="Satoh T."/>
            <person name="Shirai Y."/>
            <person name="Takahashi Y."/>
            <person name="Nakagawa K."/>
            <person name="Okumura K."/>
            <person name="Nagase T."/>
            <person name="Nomura N."/>
            <person name="Kikuchi H."/>
            <person name="Masuho Y."/>
            <person name="Yamashita R."/>
            <person name="Nakai K."/>
            <person name="Yada T."/>
            <person name="Nakamura Y."/>
            <person name="Ohara O."/>
            <person name="Isogai T."/>
            <person name="Sugano S."/>
        </authorList>
    </citation>
    <scope>NUCLEOTIDE SEQUENCE [LARGE SCALE MRNA] (ISOFORM 3)</scope>
</reference>
<reference key="5">
    <citation type="journal article" date="2007" name="BMC Genomics">
        <title>The full-ORF clone resource of the German cDNA consortium.</title>
        <authorList>
            <person name="Bechtel S."/>
            <person name="Rosenfelder H."/>
            <person name="Duda A."/>
            <person name="Schmidt C.P."/>
            <person name="Ernst U."/>
            <person name="Wellenreuther R."/>
            <person name="Mehrle A."/>
            <person name="Schuster C."/>
            <person name="Bahr A."/>
            <person name="Bloecker H."/>
            <person name="Heubner D."/>
            <person name="Hoerlein A."/>
            <person name="Michel G."/>
            <person name="Wedler H."/>
            <person name="Koehrer K."/>
            <person name="Ottenwaelder B."/>
            <person name="Poustka A."/>
            <person name="Wiemann S."/>
            <person name="Schupp I."/>
        </authorList>
    </citation>
    <scope>NUCLEOTIDE SEQUENCE [LARGE SCALE MRNA] (ISOFORM 2)</scope>
    <source>
        <tissue>Testis</tissue>
    </source>
</reference>
<reference key="6">
    <citation type="journal article" date="2006" name="Nature">
        <title>Human chromosome 11 DNA sequence and analysis including novel gene identification.</title>
        <authorList>
            <person name="Taylor T.D."/>
            <person name="Noguchi H."/>
            <person name="Totoki Y."/>
            <person name="Toyoda A."/>
            <person name="Kuroki Y."/>
            <person name="Dewar K."/>
            <person name="Lloyd C."/>
            <person name="Itoh T."/>
            <person name="Takeda T."/>
            <person name="Kim D.-W."/>
            <person name="She X."/>
            <person name="Barlow K.F."/>
            <person name="Bloom T."/>
            <person name="Bruford E."/>
            <person name="Chang J.L."/>
            <person name="Cuomo C.A."/>
            <person name="Eichler E."/>
            <person name="FitzGerald M.G."/>
            <person name="Jaffe D.B."/>
            <person name="LaButti K."/>
            <person name="Nicol R."/>
            <person name="Park H.-S."/>
            <person name="Seaman C."/>
            <person name="Sougnez C."/>
            <person name="Yang X."/>
            <person name="Zimmer A.R."/>
            <person name="Zody M.C."/>
            <person name="Birren B.W."/>
            <person name="Nusbaum C."/>
            <person name="Fujiyama A."/>
            <person name="Hattori M."/>
            <person name="Rogers J."/>
            <person name="Lander E.S."/>
            <person name="Sakaki Y."/>
        </authorList>
    </citation>
    <scope>NUCLEOTIDE SEQUENCE [LARGE SCALE GENOMIC DNA]</scope>
</reference>
<reference key="7">
    <citation type="submission" date="2005-07" db="EMBL/GenBank/DDBJ databases">
        <authorList>
            <person name="Mural R.J."/>
            <person name="Istrail S."/>
            <person name="Sutton G.G."/>
            <person name="Florea L."/>
            <person name="Halpern A.L."/>
            <person name="Mobarry C.M."/>
            <person name="Lippert R."/>
            <person name="Walenz B."/>
            <person name="Shatkay H."/>
            <person name="Dew I."/>
            <person name="Miller J.R."/>
            <person name="Flanigan M.J."/>
            <person name="Edwards N.J."/>
            <person name="Bolanos R."/>
            <person name="Fasulo D."/>
            <person name="Halldorsson B.V."/>
            <person name="Hannenhalli S."/>
            <person name="Turner R."/>
            <person name="Yooseph S."/>
            <person name="Lu F."/>
            <person name="Nusskern D.R."/>
            <person name="Shue B.C."/>
            <person name="Zheng X.H."/>
            <person name="Zhong F."/>
            <person name="Delcher A.L."/>
            <person name="Huson D.H."/>
            <person name="Kravitz S.A."/>
            <person name="Mouchard L."/>
            <person name="Reinert K."/>
            <person name="Remington K.A."/>
            <person name="Clark A.G."/>
            <person name="Waterman M.S."/>
            <person name="Eichler E.E."/>
            <person name="Adams M.D."/>
            <person name="Hunkapiller M.W."/>
            <person name="Myers E.W."/>
            <person name="Venter J.C."/>
        </authorList>
    </citation>
    <scope>NUCLEOTIDE SEQUENCE [LARGE SCALE GENOMIC DNA]</scope>
</reference>
<reference key="8">
    <citation type="journal article" date="2004" name="Genome Res.">
        <title>The status, quality, and expansion of the NIH full-length cDNA project: the Mammalian Gene Collection (MGC).</title>
        <authorList>
            <consortium name="The MGC Project Team"/>
        </authorList>
    </citation>
    <scope>NUCLEOTIDE SEQUENCE [LARGE SCALE MRNA] (ISOFORM 1)</scope>
    <scope>VARIANT ASN-400</scope>
    <source>
        <tissue>Colon</tissue>
    </source>
</reference>
<sequence>MGPGARLAALLAVLALGTGDPERAAARGDTFSALTSVARALAPERRLLGLLRRYLRGEEARLRDLTRFYDKVLSLHEDSTTPVANPLLAFTLIKRLQSDWRNVVHSLEASENIRALKDGYEKVEQDLPAFEDLEGAARALMRLQDVYMLNVKGLARGVFQRVTGSAITDLYSPKRLFSLTGDDCFQVGKVAYDMGDYYHAIPWLEEAVSLFRGSYGEWKTEDEASLEDALDHLAFAYFRAGNVSCALSLSREFLLYSPDNKRMARNVLKYERLLAESPNHVVAEAVIQRPNIPHLQTRDTYEGLCQTLGSQPTLYQIPSLYCSYETNSNAYLLLQPIRKEVIHLEPYIALYHDFVSDSEAQKIRELAEPWLQRSVVASGEKQLQVEYRISKSAWLKDTVDPKLVTLNHRIAALTGLDVRPPYAEYLQVVNYGIGGHYEPHFDHATSPSSPLYRMKSGNRVATFMIYLSSVEAGGATAFIYANLSVPVVRNAALFWWNLHRSGEGDSDTLHAGCPVLVGDKWVANKWIHEYGQEFRRPCSSSPED</sequence>
<evidence type="ECO:0000255" key="1"/>
<evidence type="ECO:0000255" key="2">
    <source>
        <dbReference type="PROSITE-ProRule" id="PRU00805"/>
    </source>
</evidence>
<evidence type="ECO:0000269" key="3">
    <source>
    </source>
</evidence>
<evidence type="ECO:0000269" key="4">
    <source>
    </source>
</evidence>
<evidence type="ECO:0000269" key="5">
    <source>
    </source>
</evidence>
<evidence type="ECO:0000303" key="6">
    <source>
    </source>
</evidence>
<evidence type="ECO:0000303" key="7">
    <source>
    </source>
</evidence>
<evidence type="ECO:0000305" key="8"/>
<evidence type="ECO:0000305" key="9">
    <source>
    </source>
</evidence>
<keyword id="KW-0025">Alternative splicing</keyword>
<keyword id="KW-0175">Coiled coil</keyword>
<keyword id="KW-0223">Dioxygenase</keyword>
<keyword id="KW-0256">Endoplasmic reticulum</keyword>
<keyword id="KW-0325">Glycoprotein</keyword>
<keyword id="KW-0408">Iron</keyword>
<keyword id="KW-0479">Metal-binding</keyword>
<keyword id="KW-0560">Oxidoreductase</keyword>
<keyword id="KW-1267">Proteomics identification</keyword>
<keyword id="KW-1185">Reference proteome</keyword>
<keyword id="KW-0732">Signal</keyword>
<keyword id="KW-0802">TPR repeat</keyword>
<keyword id="KW-0847">Vitamin C</keyword>
<gene>
    <name type="primary">P4HA3</name>
    <name type="ORF">UNQ711/PRO1374</name>
</gene>
<protein>
    <recommendedName>
        <fullName>Prolyl 4-hydroxylase subunit alpha-3</fullName>
        <shortName>4-PH alpha-3</shortName>
        <ecNumber evidence="4">1.14.11.2</ecNumber>
    </recommendedName>
    <alternativeName>
        <fullName>Procollagen-proline,2-oxoglutarate-4-dioxygenase subunit alpha-3</fullName>
    </alternativeName>
</protein>